<proteinExistence type="inferred from homology"/>
<name>FPG_SALCH</name>
<sequence length="269" mass="30175">MPELPEVETSRRGIEPHLVGATILHAHIRNGRLRWPVSDEIYRLSDTPVLSVQRRAKYLLLELPDGWIIIHLGMSGSLRILPEALPAEKHDHVDLVMSNGKILRYTDPRRFGAWLWTKELEGHNVLAHLGPEPLSGEFNGEYLQQKCAKKKTAIKPWLMDNKLVVGVGNIYASESLFAAGIHPDRLASSLSTEECDLLARVIKAVLLRSIEQGGTTLKDFLQSDGKPGYFAQELQVYGRKGEPCRVCGTPIVATKHAQRATFYCRHCQK</sequence>
<protein>
    <recommendedName>
        <fullName evidence="2">Formamidopyrimidine-DNA glycosylase</fullName>
        <shortName evidence="2">Fapy-DNA glycosylase</shortName>
        <ecNumber evidence="2">3.2.2.23</ecNumber>
    </recommendedName>
    <alternativeName>
        <fullName evidence="2">DNA-(apurinic or apyrimidinic site) lyase MutM</fullName>
        <shortName evidence="2">AP lyase MutM</shortName>
        <ecNumber evidence="2">4.2.99.18</ecNumber>
    </alternativeName>
</protein>
<gene>
    <name evidence="2" type="primary">mutM</name>
    <name evidence="2" type="synonym">fpg</name>
    <name type="ordered locus">SCH_3649</name>
</gene>
<reference key="1">
    <citation type="journal article" date="2005" name="Nucleic Acids Res.">
        <title>The genome sequence of Salmonella enterica serovar Choleraesuis, a highly invasive and resistant zoonotic pathogen.</title>
        <authorList>
            <person name="Chiu C.-H."/>
            <person name="Tang P."/>
            <person name="Chu C."/>
            <person name="Hu S."/>
            <person name="Bao Q."/>
            <person name="Yu J."/>
            <person name="Chou Y.-Y."/>
            <person name="Wang H.-S."/>
            <person name="Lee Y.-S."/>
        </authorList>
    </citation>
    <scope>NUCLEOTIDE SEQUENCE [LARGE SCALE GENOMIC DNA]</scope>
    <source>
        <strain>SC-B67</strain>
    </source>
</reference>
<dbReference type="EC" id="3.2.2.23" evidence="2"/>
<dbReference type="EC" id="4.2.99.18" evidence="2"/>
<dbReference type="EMBL" id="AE017220">
    <property type="protein sequence ID" value="AAX67555.1"/>
    <property type="molecule type" value="Genomic_DNA"/>
</dbReference>
<dbReference type="RefSeq" id="WP_001541124.1">
    <property type="nucleotide sequence ID" value="NC_006905.1"/>
</dbReference>
<dbReference type="SMR" id="Q57IA7"/>
<dbReference type="KEGG" id="sec:SCH_3649"/>
<dbReference type="HOGENOM" id="CLU_038423_1_1_6"/>
<dbReference type="Proteomes" id="UP000000538">
    <property type="component" value="Chromosome"/>
</dbReference>
<dbReference type="GO" id="GO:0034039">
    <property type="term" value="F:8-oxo-7,8-dihydroguanine DNA N-glycosylase activity"/>
    <property type="evidence" value="ECO:0007669"/>
    <property type="project" value="TreeGrafter"/>
</dbReference>
<dbReference type="GO" id="GO:0140078">
    <property type="term" value="F:class I DNA-(apurinic or apyrimidinic site) endonuclease activity"/>
    <property type="evidence" value="ECO:0007669"/>
    <property type="project" value="UniProtKB-EC"/>
</dbReference>
<dbReference type="GO" id="GO:0003684">
    <property type="term" value="F:damaged DNA binding"/>
    <property type="evidence" value="ECO:0007669"/>
    <property type="project" value="InterPro"/>
</dbReference>
<dbReference type="GO" id="GO:0008270">
    <property type="term" value="F:zinc ion binding"/>
    <property type="evidence" value="ECO:0007669"/>
    <property type="project" value="UniProtKB-UniRule"/>
</dbReference>
<dbReference type="GO" id="GO:0006284">
    <property type="term" value="P:base-excision repair"/>
    <property type="evidence" value="ECO:0007669"/>
    <property type="project" value="InterPro"/>
</dbReference>
<dbReference type="CDD" id="cd08966">
    <property type="entry name" value="EcFpg-like_N"/>
    <property type="match status" value="1"/>
</dbReference>
<dbReference type="FunFam" id="1.10.8.50:FF:000003">
    <property type="entry name" value="Formamidopyrimidine-DNA glycosylase"/>
    <property type="match status" value="1"/>
</dbReference>
<dbReference type="FunFam" id="3.20.190.10:FF:000001">
    <property type="entry name" value="Formamidopyrimidine-DNA glycosylase"/>
    <property type="match status" value="1"/>
</dbReference>
<dbReference type="Gene3D" id="1.10.8.50">
    <property type="match status" value="1"/>
</dbReference>
<dbReference type="Gene3D" id="3.20.190.10">
    <property type="entry name" value="MutM-like, N-terminal"/>
    <property type="match status" value="1"/>
</dbReference>
<dbReference type="HAMAP" id="MF_00103">
    <property type="entry name" value="Fapy_DNA_glycosyl"/>
    <property type="match status" value="1"/>
</dbReference>
<dbReference type="InterPro" id="IPR015886">
    <property type="entry name" value="DNA_glyclase/AP_lyase_DNA-bd"/>
</dbReference>
<dbReference type="InterPro" id="IPR015887">
    <property type="entry name" value="DNA_glyclase_Znf_dom_DNA_BS"/>
</dbReference>
<dbReference type="InterPro" id="IPR020629">
    <property type="entry name" value="Formamido-pyr_DNA_Glyclase"/>
</dbReference>
<dbReference type="InterPro" id="IPR012319">
    <property type="entry name" value="FPG_cat"/>
</dbReference>
<dbReference type="InterPro" id="IPR035937">
    <property type="entry name" value="MutM-like_N-ter"/>
</dbReference>
<dbReference type="InterPro" id="IPR010979">
    <property type="entry name" value="Ribosomal_uS13-like_H2TH"/>
</dbReference>
<dbReference type="InterPro" id="IPR000214">
    <property type="entry name" value="Znf_DNA_glyclase/AP_lyase"/>
</dbReference>
<dbReference type="InterPro" id="IPR010663">
    <property type="entry name" value="Znf_FPG/IleRS"/>
</dbReference>
<dbReference type="NCBIfam" id="TIGR00577">
    <property type="entry name" value="fpg"/>
    <property type="match status" value="1"/>
</dbReference>
<dbReference type="NCBIfam" id="NF002211">
    <property type="entry name" value="PRK01103.1"/>
    <property type="match status" value="1"/>
</dbReference>
<dbReference type="PANTHER" id="PTHR22993">
    <property type="entry name" value="FORMAMIDOPYRIMIDINE-DNA GLYCOSYLASE"/>
    <property type="match status" value="1"/>
</dbReference>
<dbReference type="PANTHER" id="PTHR22993:SF9">
    <property type="entry name" value="FORMAMIDOPYRIMIDINE-DNA GLYCOSYLASE"/>
    <property type="match status" value="1"/>
</dbReference>
<dbReference type="Pfam" id="PF01149">
    <property type="entry name" value="Fapy_DNA_glyco"/>
    <property type="match status" value="1"/>
</dbReference>
<dbReference type="Pfam" id="PF06831">
    <property type="entry name" value="H2TH"/>
    <property type="match status" value="1"/>
</dbReference>
<dbReference type="Pfam" id="PF06827">
    <property type="entry name" value="zf-FPG_IleRS"/>
    <property type="match status" value="1"/>
</dbReference>
<dbReference type="SMART" id="SM00898">
    <property type="entry name" value="Fapy_DNA_glyco"/>
    <property type="match status" value="1"/>
</dbReference>
<dbReference type="SMART" id="SM01232">
    <property type="entry name" value="H2TH"/>
    <property type="match status" value="1"/>
</dbReference>
<dbReference type="SUPFAM" id="SSF57716">
    <property type="entry name" value="Glucocorticoid receptor-like (DNA-binding domain)"/>
    <property type="match status" value="1"/>
</dbReference>
<dbReference type="SUPFAM" id="SSF81624">
    <property type="entry name" value="N-terminal domain of MutM-like DNA repair proteins"/>
    <property type="match status" value="1"/>
</dbReference>
<dbReference type="SUPFAM" id="SSF46946">
    <property type="entry name" value="S13-like H2TH domain"/>
    <property type="match status" value="1"/>
</dbReference>
<dbReference type="PROSITE" id="PS51068">
    <property type="entry name" value="FPG_CAT"/>
    <property type="match status" value="1"/>
</dbReference>
<dbReference type="PROSITE" id="PS01242">
    <property type="entry name" value="ZF_FPG_1"/>
    <property type="match status" value="1"/>
</dbReference>
<dbReference type="PROSITE" id="PS51066">
    <property type="entry name" value="ZF_FPG_2"/>
    <property type="match status" value="1"/>
</dbReference>
<feature type="initiator methionine" description="Removed" evidence="1">
    <location>
        <position position="1"/>
    </location>
</feature>
<feature type="chain" id="PRO_0000228467" description="Formamidopyrimidine-DNA glycosylase">
    <location>
        <begin position="2"/>
        <end position="269"/>
    </location>
</feature>
<feature type="zinc finger region" description="FPG-type" evidence="2">
    <location>
        <begin position="235"/>
        <end position="269"/>
    </location>
</feature>
<feature type="active site" description="Schiff-base intermediate with DNA" evidence="2">
    <location>
        <position position="2"/>
    </location>
</feature>
<feature type="active site" description="Proton donor" evidence="2">
    <location>
        <position position="3"/>
    </location>
</feature>
<feature type="active site" description="Proton donor; for beta-elimination activity" evidence="2">
    <location>
        <position position="57"/>
    </location>
</feature>
<feature type="active site" description="Proton donor; for delta-elimination activity" evidence="2">
    <location>
        <position position="259"/>
    </location>
</feature>
<feature type="binding site" evidence="2">
    <location>
        <position position="90"/>
    </location>
    <ligand>
        <name>DNA</name>
        <dbReference type="ChEBI" id="CHEBI:16991"/>
    </ligand>
</feature>
<feature type="binding site" evidence="2">
    <location>
        <position position="109"/>
    </location>
    <ligand>
        <name>DNA</name>
        <dbReference type="ChEBI" id="CHEBI:16991"/>
    </ligand>
</feature>
<feature type="binding site" evidence="2">
    <location>
        <position position="150"/>
    </location>
    <ligand>
        <name>DNA</name>
        <dbReference type="ChEBI" id="CHEBI:16991"/>
    </ligand>
</feature>
<comment type="function">
    <text evidence="2">Involved in base excision repair of DNA damaged by oxidation or by mutagenic agents. Acts as a DNA glycosylase that recognizes and removes damaged bases. Has a preference for oxidized purines, such as 7,8-dihydro-8-oxoguanine (8-oxoG). Has AP (apurinic/apyrimidinic) lyase activity and introduces nicks in the DNA strand. Cleaves the DNA backbone by beta-delta elimination to generate a single-strand break at the site of the removed base with both 3'- and 5'-phosphates.</text>
</comment>
<comment type="catalytic activity">
    <reaction evidence="2">
        <text>Hydrolysis of DNA containing ring-opened 7-methylguanine residues, releasing 2,6-diamino-4-hydroxy-5-(N-methyl)formamidopyrimidine.</text>
        <dbReference type="EC" id="3.2.2.23"/>
    </reaction>
</comment>
<comment type="catalytic activity">
    <reaction evidence="2">
        <text>2'-deoxyribonucleotide-(2'-deoxyribose 5'-phosphate)-2'-deoxyribonucleotide-DNA = a 3'-end 2'-deoxyribonucleotide-(2,3-dehydro-2,3-deoxyribose 5'-phosphate)-DNA + a 5'-end 5'-phospho-2'-deoxyribonucleoside-DNA + H(+)</text>
        <dbReference type="Rhea" id="RHEA:66592"/>
        <dbReference type="Rhea" id="RHEA-COMP:13180"/>
        <dbReference type="Rhea" id="RHEA-COMP:16897"/>
        <dbReference type="Rhea" id="RHEA-COMP:17067"/>
        <dbReference type="ChEBI" id="CHEBI:15378"/>
        <dbReference type="ChEBI" id="CHEBI:136412"/>
        <dbReference type="ChEBI" id="CHEBI:157695"/>
        <dbReference type="ChEBI" id="CHEBI:167181"/>
        <dbReference type="EC" id="4.2.99.18"/>
    </reaction>
</comment>
<comment type="cofactor">
    <cofactor evidence="2">
        <name>Zn(2+)</name>
        <dbReference type="ChEBI" id="CHEBI:29105"/>
    </cofactor>
    <text evidence="2">Binds 1 zinc ion per subunit.</text>
</comment>
<comment type="subunit">
    <text evidence="2">Monomer.</text>
</comment>
<comment type="similarity">
    <text evidence="2">Belongs to the FPG family.</text>
</comment>
<keyword id="KW-0227">DNA damage</keyword>
<keyword id="KW-0234">DNA repair</keyword>
<keyword id="KW-0238">DNA-binding</keyword>
<keyword id="KW-0326">Glycosidase</keyword>
<keyword id="KW-0378">Hydrolase</keyword>
<keyword id="KW-0456">Lyase</keyword>
<keyword id="KW-0479">Metal-binding</keyword>
<keyword id="KW-0511">Multifunctional enzyme</keyword>
<keyword id="KW-0862">Zinc</keyword>
<keyword id="KW-0863">Zinc-finger</keyword>
<accession>Q57IA7</accession>
<organism>
    <name type="scientific">Salmonella choleraesuis (strain SC-B67)</name>
    <dbReference type="NCBI Taxonomy" id="321314"/>
    <lineage>
        <taxon>Bacteria</taxon>
        <taxon>Pseudomonadati</taxon>
        <taxon>Pseudomonadota</taxon>
        <taxon>Gammaproteobacteria</taxon>
        <taxon>Enterobacterales</taxon>
        <taxon>Enterobacteriaceae</taxon>
        <taxon>Salmonella</taxon>
    </lineage>
</organism>
<evidence type="ECO:0000250" key="1"/>
<evidence type="ECO:0000255" key="2">
    <source>
        <dbReference type="HAMAP-Rule" id="MF_00103"/>
    </source>
</evidence>